<dbReference type="EMBL" id="BC160613">
    <property type="status" value="NOT_ANNOTATED_CDS"/>
    <property type="molecule type" value="mRNA"/>
</dbReference>
<dbReference type="EMBL" id="FJ392617">
    <property type="protein sequence ID" value="ACJ64071.1"/>
    <property type="molecule type" value="mRNA"/>
</dbReference>
<dbReference type="RefSeq" id="NP_001123664.1">
    <property type="nucleotide sequence ID" value="NM_001130192.1"/>
</dbReference>
<dbReference type="SMR" id="B7TWP7"/>
<dbReference type="FunCoup" id="B7TWP7">
    <property type="interactions" value="1285"/>
</dbReference>
<dbReference type="STRING" id="7955.ENSDARP00000113947"/>
<dbReference type="PaxDb" id="7955-ENSDARP00000113947"/>
<dbReference type="Ensembl" id="ENSDART00000145055">
    <property type="protein sequence ID" value="ENSDARP00000113947"/>
    <property type="gene ID" value="ENSDARG00000053291"/>
</dbReference>
<dbReference type="Ensembl" id="ENSDART00000190354">
    <property type="protein sequence ID" value="ENSDARP00000152312"/>
    <property type="gene ID" value="ENSDARG00000112537"/>
</dbReference>
<dbReference type="GeneID" id="565522"/>
<dbReference type="KEGG" id="dre:565522"/>
<dbReference type="AGR" id="ZFIN:ZDB-GENE-030131-5475"/>
<dbReference type="CTD" id="55629"/>
<dbReference type="ZFIN" id="ZDB-GENE-030131-5475">
    <property type="gene designation" value="pnrc2"/>
</dbReference>
<dbReference type="eggNOG" id="ENOG502RZZX">
    <property type="taxonomic scope" value="Eukaryota"/>
</dbReference>
<dbReference type="HOGENOM" id="CLU_086541_1_0_1"/>
<dbReference type="InParanoid" id="B7TWP7"/>
<dbReference type="OMA" id="PCDHREM"/>
<dbReference type="OrthoDB" id="8732832at2759"/>
<dbReference type="PhylomeDB" id="B7TWP7"/>
<dbReference type="Reactome" id="R-DRE-975957">
    <property type="pathway name" value="Nonsense Mediated Decay (NMD) enhanced by the Exon Junction Complex (EJC)"/>
</dbReference>
<dbReference type="PRO" id="PR:B7TWP7"/>
<dbReference type="Proteomes" id="UP000000437">
    <property type="component" value="Alternate scaffold 16"/>
</dbReference>
<dbReference type="Proteomes" id="UP000000437">
    <property type="component" value="Chromosome 16"/>
</dbReference>
<dbReference type="Bgee" id="ENSDARG00000053291">
    <property type="expression patterns" value="Expressed in cardiac ventricle and 26 other cell types or tissues"/>
</dbReference>
<dbReference type="ExpressionAtlas" id="B7TWP7">
    <property type="expression patterns" value="baseline and differential"/>
</dbReference>
<dbReference type="GO" id="GO:0005634">
    <property type="term" value="C:nucleus"/>
    <property type="evidence" value="ECO:0000250"/>
    <property type="project" value="UniProtKB"/>
</dbReference>
<dbReference type="GO" id="GO:0000932">
    <property type="term" value="C:P-body"/>
    <property type="evidence" value="ECO:0000250"/>
    <property type="project" value="UniProtKB"/>
</dbReference>
<dbReference type="GO" id="GO:0000956">
    <property type="term" value="P:nuclear-transcribed mRNA catabolic process"/>
    <property type="evidence" value="ECO:0000315"/>
    <property type="project" value="ZFIN"/>
</dbReference>
<dbReference type="GO" id="GO:0000184">
    <property type="term" value="P:nuclear-transcribed mRNA catabolic process, nonsense-mediated decay"/>
    <property type="evidence" value="ECO:0000250"/>
    <property type="project" value="UniProtKB"/>
</dbReference>
<dbReference type="InterPro" id="IPR028322">
    <property type="entry name" value="PNRC-like_rgn"/>
</dbReference>
<dbReference type="InterPro" id="IPR026780">
    <property type="entry name" value="PNRC1/2"/>
</dbReference>
<dbReference type="PANTHER" id="PTHR15405">
    <property type="entry name" value="PROLINE-RICH NUCLEAR RECEPTOR COACTIVATOR"/>
    <property type="match status" value="1"/>
</dbReference>
<dbReference type="Pfam" id="PF15365">
    <property type="entry name" value="PNRC"/>
    <property type="match status" value="1"/>
</dbReference>
<evidence type="ECO:0000250" key="1"/>
<evidence type="ECO:0000256" key="2">
    <source>
        <dbReference type="SAM" id="MobiDB-lite"/>
    </source>
</evidence>
<evidence type="ECO:0000305" key="3"/>
<sequence>MGGGERYNIPDRPAPKKSQPVSRGKQRSRDQNGVMHSAASGALGVPHHLRRGEKGTSYSWSPEARQAVSVDKKNGSVRFATPYDQNWESHLNKLLSAQCGQNYAGAKFSEPPSPSVLPKPPSHWVSLPMGDHRELMTFQLKSLLKVQA</sequence>
<gene>
    <name type="primary">pnrc2</name>
</gene>
<name>PNRC2_DANRE</name>
<reference key="1">
    <citation type="submission" date="2008-03" db="EMBL/GenBank/DDBJ databases">
        <authorList>
            <consortium name="NIH - Zebrafish Gene Collection (ZGC) project"/>
        </authorList>
    </citation>
    <scope>NUCLEOTIDE SEQUENCE [LARGE SCALE MRNA]</scope>
    <source>
        <tissue>Embryo</tissue>
    </source>
</reference>
<reference key="2">
    <citation type="journal article" date="2009" name="Gene Expr. Patterns">
        <title>Identification of differentially expressed genes in the zebrafish hypothalamic-pituitary axis.</title>
        <authorList>
            <person name="Toro S."/>
            <person name="Wegner J."/>
            <person name="Muller M."/>
            <person name="Westerfield M."/>
            <person name="Varga Z.M."/>
        </authorList>
    </citation>
    <scope>NUCLEOTIDE SEQUENCE [MRNA] OF 84-148</scope>
</reference>
<organism>
    <name type="scientific">Danio rerio</name>
    <name type="common">Zebrafish</name>
    <name type="synonym">Brachydanio rerio</name>
    <dbReference type="NCBI Taxonomy" id="7955"/>
    <lineage>
        <taxon>Eukaryota</taxon>
        <taxon>Metazoa</taxon>
        <taxon>Chordata</taxon>
        <taxon>Craniata</taxon>
        <taxon>Vertebrata</taxon>
        <taxon>Euteleostomi</taxon>
        <taxon>Actinopterygii</taxon>
        <taxon>Neopterygii</taxon>
        <taxon>Teleostei</taxon>
        <taxon>Ostariophysi</taxon>
        <taxon>Cypriniformes</taxon>
        <taxon>Danionidae</taxon>
        <taxon>Danioninae</taxon>
        <taxon>Danio</taxon>
    </lineage>
</organism>
<proteinExistence type="evidence at transcript level"/>
<accession>B7TWP7</accession>
<feature type="chain" id="PRO_0000377564" description="Proline-rich nuclear receptor coactivator 2">
    <location>
        <begin position="1"/>
        <end position="148"/>
    </location>
</feature>
<feature type="region of interest" description="Disordered" evidence="2">
    <location>
        <begin position="1"/>
        <end position="69"/>
    </location>
</feature>
<feature type="short sequence motif" description="SH3-binding">
    <location>
        <begin position="109"/>
        <end position="115"/>
    </location>
</feature>
<feature type="sequence conflict" description="In Ref. 2; ACJ64071." evidence="3" ref="2">
    <original>E</original>
    <variation>G</variation>
    <location>
        <position position="88"/>
    </location>
</feature>
<keyword id="KW-0010">Activator</keyword>
<keyword id="KW-0963">Cytoplasm</keyword>
<keyword id="KW-0866">Nonsense-mediated mRNA decay</keyword>
<keyword id="KW-0539">Nucleus</keyword>
<keyword id="KW-1185">Reference proteome</keyword>
<keyword id="KW-0804">Transcription</keyword>
<keyword id="KW-0805">Transcription regulation</keyword>
<comment type="function">
    <text evidence="1">Involved in nonsense-mediated mRNA decay (NMD) by acting as a bridge between the mRNA decapping complex and the NMD machinery. May act by targeting the NMD machinery to the P-body and recruiting the decapping machinery to aberrant mRNAs. Required for upf1/rent1 localization to the P-body. Also acts as a nuclear receptor coactivator (By similarity).</text>
</comment>
<comment type="subcellular location">
    <subcellularLocation>
        <location evidence="1">Nucleus</location>
    </subcellularLocation>
    <subcellularLocation>
        <location evidence="1">Cytoplasm</location>
        <location evidence="1">P-body</location>
    </subcellularLocation>
</comment>
<comment type="similarity">
    <text evidence="3">Belongs to the PNRC family. PNRC2 subfamily.</text>
</comment>
<protein>
    <recommendedName>
        <fullName>Proline-rich nuclear receptor coactivator 2</fullName>
    </recommendedName>
</protein>